<name>ATGT_AERPE</name>
<protein>
    <recommendedName>
        <fullName evidence="1">tRNA-guanine(15) transglycosylase</fullName>
        <ecNumber evidence="1">2.4.2.48</ecNumber>
    </recommendedName>
    <alternativeName>
        <fullName evidence="1">7-cyano-7-deazaguanine tRNA-ribosyltransferase</fullName>
    </alternativeName>
    <alternativeName>
        <fullName evidence="1">Archaeal tRNA-guanine transglycosylase</fullName>
    </alternativeName>
</protein>
<proteinExistence type="inferred from homology"/>
<reference key="1">
    <citation type="journal article" date="1999" name="DNA Res.">
        <title>Complete genome sequence of an aerobic hyper-thermophilic crenarchaeon, Aeropyrum pernix K1.</title>
        <authorList>
            <person name="Kawarabayasi Y."/>
            <person name="Hino Y."/>
            <person name="Horikawa H."/>
            <person name="Yamazaki S."/>
            <person name="Haikawa Y."/>
            <person name="Jin-no K."/>
            <person name="Takahashi M."/>
            <person name="Sekine M."/>
            <person name="Baba S."/>
            <person name="Ankai A."/>
            <person name="Kosugi H."/>
            <person name="Hosoyama A."/>
            <person name="Fukui S."/>
            <person name="Nagai Y."/>
            <person name="Nishijima K."/>
            <person name="Nakazawa H."/>
            <person name="Takamiya M."/>
            <person name="Masuda S."/>
            <person name="Funahashi T."/>
            <person name="Tanaka T."/>
            <person name="Kudoh Y."/>
            <person name="Yamazaki J."/>
            <person name="Kushida N."/>
            <person name="Oguchi A."/>
            <person name="Aoki K."/>
            <person name="Kubota K."/>
            <person name="Nakamura Y."/>
            <person name="Nomura N."/>
            <person name="Sako Y."/>
            <person name="Kikuchi H."/>
        </authorList>
    </citation>
    <scope>NUCLEOTIDE SEQUENCE [LARGE SCALE GENOMIC DNA]</scope>
    <source>
        <strain>ATCC 700893 / DSM 11879 / JCM 9820 / NBRC 100138 / K1</strain>
    </source>
</reference>
<dbReference type="EC" id="2.4.2.48" evidence="1"/>
<dbReference type="EMBL" id="BA000002">
    <property type="protein sequence ID" value="BAA81027.1"/>
    <property type="molecule type" value="Genomic_DNA"/>
</dbReference>
<dbReference type="PIR" id="C72505">
    <property type="entry name" value="C72505"/>
</dbReference>
<dbReference type="RefSeq" id="WP_010866739.1">
    <property type="nucleotide sequence ID" value="NC_000854.2"/>
</dbReference>
<dbReference type="SMR" id="Q9YAC2"/>
<dbReference type="STRING" id="272557.APE_2017"/>
<dbReference type="EnsemblBacteria" id="BAA81027">
    <property type="protein sequence ID" value="BAA81027"/>
    <property type="gene ID" value="APE_2017"/>
</dbReference>
<dbReference type="GeneID" id="1445130"/>
<dbReference type="KEGG" id="ape:APE_2017"/>
<dbReference type="PATRIC" id="fig|272557.25.peg.1343"/>
<dbReference type="eggNOG" id="arCOG00989">
    <property type="taxonomic scope" value="Archaea"/>
</dbReference>
<dbReference type="UniPathway" id="UPA00393"/>
<dbReference type="Proteomes" id="UP000002518">
    <property type="component" value="Chromosome"/>
</dbReference>
<dbReference type="GO" id="GO:0005737">
    <property type="term" value="C:cytoplasm"/>
    <property type="evidence" value="ECO:0007669"/>
    <property type="project" value="TreeGrafter"/>
</dbReference>
<dbReference type="GO" id="GO:0016763">
    <property type="term" value="F:pentosyltransferase activity"/>
    <property type="evidence" value="ECO:0007669"/>
    <property type="project" value="UniProtKB-UniRule"/>
</dbReference>
<dbReference type="GO" id="GO:0008270">
    <property type="term" value="F:zinc ion binding"/>
    <property type="evidence" value="ECO:0007669"/>
    <property type="project" value="UniProtKB-UniRule"/>
</dbReference>
<dbReference type="GO" id="GO:0002099">
    <property type="term" value="P:tRNA wobble guanine modification"/>
    <property type="evidence" value="ECO:0007669"/>
    <property type="project" value="TreeGrafter"/>
</dbReference>
<dbReference type="Gene3D" id="3.20.20.105">
    <property type="entry name" value="Queuine tRNA-ribosyltransferase-like"/>
    <property type="match status" value="1"/>
</dbReference>
<dbReference type="HAMAP" id="MF_01634">
    <property type="entry name" value="TgtA_arch"/>
    <property type="match status" value="1"/>
</dbReference>
<dbReference type="InterPro" id="IPR050076">
    <property type="entry name" value="ArchSynthase1/Queuine_TRR"/>
</dbReference>
<dbReference type="InterPro" id="IPR036511">
    <property type="entry name" value="TGT-like_sf"/>
</dbReference>
<dbReference type="InterPro" id="IPR004804">
    <property type="entry name" value="TgtA"/>
</dbReference>
<dbReference type="InterPro" id="IPR002616">
    <property type="entry name" value="tRNA_ribo_trans-like"/>
</dbReference>
<dbReference type="NCBIfam" id="TIGR00432">
    <property type="entry name" value="arcsn_tRNA_tgt"/>
    <property type="match status" value="1"/>
</dbReference>
<dbReference type="NCBIfam" id="TIGR00449">
    <property type="entry name" value="tgt_general"/>
    <property type="match status" value="1"/>
</dbReference>
<dbReference type="PANTHER" id="PTHR46499">
    <property type="entry name" value="QUEUINE TRNA-RIBOSYLTRANSFERASE"/>
    <property type="match status" value="1"/>
</dbReference>
<dbReference type="PANTHER" id="PTHR46499:SF1">
    <property type="entry name" value="QUEUINE TRNA-RIBOSYLTRANSFERASE"/>
    <property type="match status" value="1"/>
</dbReference>
<dbReference type="Pfam" id="PF01702">
    <property type="entry name" value="TGT"/>
    <property type="match status" value="1"/>
</dbReference>
<dbReference type="SUPFAM" id="SSF51713">
    <property type="entry name" value="tRNA-guanine transglycosylase"/>
    <property type="match status" value="1"/>
</dbReference>
<organism>
    <name type="scientific">Aeropyrum pernix (strain ATCC 700893 / DSM 11879 / JCM 9820 / NBRC 100138 / K1)</name>
    <dbReference type="NCBI Taxonomy" id="272557"/>
    <lineage>
        <taxon>Archaea</taxon>
        <taxon>Thermoproteota</taxon>
        <taxon>Thermoprotei</taxon>
        <taxon>Desulfurococcales</taxon>
        <taxon>Desulfurococcaceae</taxon>
        <taxon>Aeropyrum</taxon>
    </lineage>
</organism>
<comment type="function">
    <text evidence="1">Exchanges the guanine residue with 7-cyano-7-deazaguanine (preQ0) at position 15 in the dihydrouridine loop (D-loop) of archaeal tRNAs.</text>
</comment>
<comment type="catalytic activity">
    <reaction evidence="1">
        <text>guanosine(15) in tRNA + 7-cyano-7-deazaguanine = 7-cyano-7-carbaguanosine(15) in tRNA + guanine</text>
        <dbReference type="Rhea" id="RHEA:43164"/>
        <dbReference type="Rhea" id="RHEA-COMP:10371"/>
        <dbReference type="Rhea" id="RHEA-COMP:10372"/>
        <dbReference type="ChEBI" id="CHEBI:16235"/>
        <dbReference type="ChEBI" id="CHEBI:45075"/>
        <dbReference type="ChEBI" id="CHEBI:74269"/>
        <dbReference type="ChEBI" id="CHEBI:82850"/>
        <dbReference type="EC" id="2.4.2.48"/>
    </reaction>
</comment>
<comment type="cofactor">
    <cofactor evidence="1">
        <name>Zn(2+)</name>
        <dbReference type="ChEBI" id="CHEBI:29105"/>
    </cofactor>
    <text evidence="1">Binds 1 zinc ion per subunit.</text>
</comment>
<comment type="pathway">
    <text evidence="1">tRNA modification; archaeosine-tRNA biosynthesis.</text>
</comment>
<comment type="similarity">
    <text evidence="1">Belongs to the archaeosine tRNA-ribosyltransferase family.</text>
</comment>
<accession>Q9YAC2</accession>
<feature type="chain" id="PRO_0000247867" description="tRNA-guanine(15) transglycosylase">
    <location>
        <begin position="1"/>
        <end position="512"/>
    </location>
</feature>
<feature type="active site" description="Nucleophile" evidence="1">
    <location>
        <position position="85"/>
    </location>
</feature>
<feature type="binding site" evidence="1">
    <location>
        <position position="120"/>
    </location>
    <ligand>
        <name>substrate</name>
    </ligand>
</feature>
<feature type="binding site" evidence="1">
    <location>
        <position position="272"/>
    </location>
    <ligand>
        <name>Zn(2+)</name>
        <dbReference type="ChEBI" id="CHEBI:29105"/>
    </ligand>
</feature>
<feature type="binding site" evidence="1">
    <location>
        <position position="274"/>
    </location>
    <ligand>
        <name>Zn(2+)</name>
        <dbReference type="ChEBI" id="CHEBI:29105"/>
    </ligand>
</feature>
<feature type="binding site" evidence="1">
    <location>
        <position position="277"/>
    </location>
    <ligand>
        <name>Zn(2+)</name>
        <dbReference type="ChEBI" id="CHEBI:29105"/>
    </ligand>
</feature>
<sequence>MFEIRDVDLAGRIGRIYTQHGVVETPAFFPVIDVYRQEVSVDEVRAAGFGQVITNAYLLWKRFGWEAAEKGVHRILGFPGVVMTDSGAYQILEYGGVELSQGEVVEYQKRLGSDIAVILDIPTGDVGRREAEESVRETIRRALEARVMIEGDERIWVYPVQGGRYFDLVEESARVGGRLGFYRMYGIGSPTVFLERYMYHVVVEAVYRAKKHLPWGRPVHLFGAGHPLIFPYAVALGVDTFDSASYILYAREGRYITEYGVYRIEDLDYLPCSCPVCSRYTPQELREMDRVERTRLLALHNLYVISASMRRVKQAIREGRLWELLEETSRKHPSTARVMARMRRYIDALEKGSARGRGVVRGVRAYGLESLSNPRLSRFSSDAARLVEAMAEKWGGGKAVLKPLDPKPEPGQCESMVGGGEWILFYQPFLGVFPVEACGAYPSLQIDYPQEGLPAEVIGDLASKIASTVSILRGRGFTVRLEYCGKVEWQARAVEALKTAAAGDLPTVEACG</sequence>
<keyword id="KW-0328">Glycosyltransferase</keyword>
<keyword id="KW-0479">Metal-binding</keyword>
<keyword id="KW-1185">Reference proteome</keyword>
<keyword id="KW-0808">Transferase</keyword>
<keyword id="KW-0819">tRNA processing</keyword>
<keyword id="KW-0862">Zinc</keyword>
<evidence type="ECO:0000255" key="1">
    <source>
        <dbReference type="HAMAP-Rule" id="MF_01634"/>
    </source>
</evidence>
<gene>
    <name evidence="1" type="primary">tgtA</name>
    <name type="ordered locus">APE_2017</name>
</gene>